<reference key="1">
    <citation type="journal article" date="2009" name="Appl. Environ. Microbiol.">
        <title>Three genomes from the phylum Acidobacteria provide insight into the lifestyles of these microorganisms in soils.</title>
        <authorList>
            <person name="Ward N.L."/>
            <person name="Challacombe J.F."/>
            <person name="Janssen P.H."/>
            <person name="Henrissat B."/>
            <person name="Coutinho P.M."/>
            <person name="Wu M."/>
            <person name="Xie G."/>
            <person name="Haft D.H."/>
            <person name="Sait M."/>
            <person name="Badger J."/>
            <person name="Barabote R.D."/>
            <person name="Bradley B."/>
            <person name="Brettin T.S."/>
            <person name="Brinkac L.M."/>
            <person name="Bruce D."/>
            <person name="Creasy T."/>
            <person name="Daugherty S.C."/>
            <person name="Davidsen T.M."/>
            <person name="DeBoy R.T."/>
            <person name="Detter J.C."/>
            <person name="Dodson R.J."/>
            <person name="Durkin A.S."/>
            <person name="Ganapathy A."/>
            <person name="Gwinn-Giglio M."/>
            <person name="Han C.S."/>
            <person name="Khouri H."/>
            <person name="Kiss H."/>
            <person name="Kothari S.P."/>
            <person name="Madupu R."/>
            <person name="Nelson K.E."/>
            <person name="Nelson W.C."/>
            <person name="Paulsen I."/>
            <person name="Penn K."/>
            <person name="Ren Q."/>
            <person name="Rosovitz M.J."/>
            <person name="Selengut J.D."/>
            <person name="Shrivastava S."/>
            <person name="Sullivan S.A."/>
            <person name="Tapia R."/>
            <person name="Thompson L.S."/>
            <person name="Watkins K.L."/>
            <person name="Yang Q."/>
            <person name="Yu C."/>
            <person name="Zafar N."/>
            <person name="Zhou L."/>
            <person name="Kuske C.R."/>
        </authorList>
    </citation>
    <scope>NUCLEOTIDE SEQUENCE [LARGE SCALE GENOMIC DNA]</scope>
    <source>
        <strain>Ellin6076</strain>
    </source>
</reference>
<feature type="chain" id="PRO_1000054547" description="Large ribosomal subunit protein uL15">
    <location>
        <begin position="1"/>
        <end position="150"/>
    </location>
</feature>
<feature type="region of interest" description="Disordered" evidence="2">
    <location>
        <begin position="1"/>
        <end position="58"/>
    </location>
</feature>
<name>RL15_SOLUE</name>
<evidence type="ECO:0000255" key="1">
    <source>
        <dbReference type="HAMAP-Rule" id="MF_01341"/>
    </source>
</evidence>
<evidence type="ECO:0000256" key="2">
    <source>
        <dbReference type="SAM" id="MobiDB-lite"/>
    </source>
</evidence>
<evidence type="ECO:0000305" key="3"/>
<protein>
    <recommendedName>
        <fullName evidence="1">Large ribosomal subunit protein uL15</fullName>
    </recommendedName>
    <alternativeName>
        <fullName evidence="3">50S ribosomal protein L15</fullName>
    </alternativeName>
</protein>
<gene>
    <name evidence="1" type="primary">rplO</name>
    <name type="ordered locus">Acid_5099</name>
</gene>
<comment type="function">
    <text evidence="1">Binds to the 23S rRNA.</text>
</comment>
<comment type="subunit">
    <text evidence="1">Part of the 50S ribosomal subunit.</text>
</comment>
<comment type="similarity">
    <text evidence="1">Belongs to the universal ribosomal protein uL15 family.</text>
</comment>
<sequence>MNLSGIKPPKGQVKTKKRIGRGMGSGHGKTATRGSKGQHAGTGFSQKRGFEGGQMPLHRRLPKRGFKNIFKKQFAIVNLGRLEKLEGNSFTIDTMLQLGLINKVYDGVKVLGTGVLTRKITVEAHHFSKSALEKIQQAGGTAQMIGAETK</sequence>
<accession>Q01WB1</accession>
<dbReference type="EMBL" id="CP000473">
    <property type="protein sequence ID" value="ABJ86054.1"/>
    <property type="molecule type" value="Genomic_DNA"/>
</dbReference>
<dbReference type="SMR" id="Q01WB1"/>
<dbReference type="FunCoup" id="Q01WB1">
    <property type="interactions" value="706"/>
</dbReference>
<dbReference type="STRING" id="234267.Acid_5099"/>
<dbReference type="KEGG" id="sus:Acid_5099"/>
<dbReference type="eggNOG" id="COG0200">
    <property type="taxonomic scope" value="Bacteria"/>
</dbReference>
<dbReference type="HOGENOM" id="CLU_055188_4_2_0"/>
<dbReference type="InParanoid" id="Q01WB1"/>
<dbReference type="OrthoDB" id="9810293at2"/>
<dbReference type="GO" id="GO:0022625">
    <property type="term" value="C:cytosolic large ribosomal subunit"/>
    <property type="evidence" value="ECO:0007669"/>
    <property type="project" value="TreeGrafter"/>
</dbReference>
<dbReference type="GO" id="GO:0019843">
    <property type="term" value="F:rRNA binding"/>
    <property type="evidence" value="ECO:0007669"/>
    <property type="project" value="UniProtKB-UniRule"/>
</dbReference>
<dbReference type="GO" id="GO:0003735">
    <property type="term" value="F:structural constituent of ribosome"/>
    <property type="evidence" value="ECO:0007669"/>
    <property type="project" value="InterPro"/>
</dbReference>
<dbReference type="GO" id="GO:0006412">
    <property type="term" value="P:translation"/>
    <property type="evidence" value="ECO:0007669"/>
    <property type="project" value="UniProtKB-UniRule"/>
</dbReference>
<dbReference type="Gene3D" id="3.100.10.10">
    <property type="match status" value="1"/>
</dbReference>
<dbReference type="HAMAP" id="MF_01341">
    <property type="entry name" value="Ribosomal_uL15"/>
    <property type="match status" value="1"/>
</dbReference>
<dbReference type="InterPro" id="IPR030878">
    <property type="entry name" value="Ribosomal_uL15"/>
</dbReference>
<dbReference type="InterPro" id="IPR021131">
    <property type="entry name" value="Ribosomal_uL15/eL18"/>
</dbReference>
<dbReference type="InterPro" id="IPR036227">
    <property type="entry name" value="Ribosomal_uL15/eL18_sf"/>
</dbReference>
<dbReference type="InterPro" id="IPR005749">
    <property type="entry name" value="Ribosomal_uL15_bac-type"/>
</dbReference>
<dbReference type="InterPro" id="IPR001196">
    <property type="entry name" value="Ribosomal_uL15_CS"/>
</dbReference>
<dbReference type="NCBIfam" id="TIGR01071">
    <property type="entry name" value="rplO_bact"/>
    <property type="match status" value="1"/>
</dbReference>
<dbReference type="PANTHER" id="PTHR12934">
    <property type="entry name" value="50S RIBOSOMAL PROTEIN L15"/>
    <property type="match status" value="1"/>
</dbReference>
<dbReference type="PANTHER" id="PTHR12934:SF11">
    <property type="entry name" value="LARGE RIBOSOMAL SUBUNIT PROTEIN UL15M"/>
    <property type="match status" value="1"/>
</dbReference>
<dbReference type="Pfam" id="PF00828">
    <property type="entry name" value="Ribosomal_L27A"/>
    <property type="match status" value="1"/>
</dbReference>
<dbReference type="SUPFAM" id="SSF52080">
    <property type="entry name" value="Ribosomal proteins L15p and L18e"/>
    <property type="match status" value="1"/>
</dbReference>
<dbReference type="PROSITE" id="PS00475">
    <property type="entry name" value="RIBOSOMAL_L15"/>
    <property type="match status" value="1"/>
</dbReference>
<keyword id="KW-0687">Ribonucleoprotein</keyword>
<keyword id="KW-0689">Ribosomal protein</keyword>
<keyword id="KW-0694">RNA-binding</keyword>
<keyword id="KW-0699">rRNA-binding</keyword>
<proteinExistence type="inferred from homology"/>
<organism>
    <name type="scientific">Solibacter usitatus (strain Ellin6076)</name>
    <dbReference type="NCBI Taxonomy" id="234267"/>
    <lineage>
        <taxon>Bacteria</taxon>
        <taxon>Pseudomonadati</taxon>
        <taxon>Acidobacteriota</taxon>
        <taxon>Terriglobia</taxon>
        <taxon>Bryobacterales</taxon>
        <taxon>Solibacteraceae</taxon>
        <taxon>Candidatus Solibacter</taxon>
    </lineage>
</organism>